<comment type="function">
    <text evidence="1">Binds 23S rRNA and is also seen to make contacts with the A and possibly P site tRNAs.</text>
</comment>
<comment type="subunit">
    <text evidence="1">Part of the 50S ribosomal subunit.</text>
</comment>
<comment type="similarity">
    <text evidence="1">Belongs to the universal ribosomal protein uL16 family.</text>
</comment>
<organism>
    <name type="scientific">Trichlorobacter lovleyi (strain ATCC BAA-1151 / DSM 17278 / SZ)</name>
    <name type="common">Geobacter lovleyi</name>
    <dbReference type="NCBI Taxonomy" id="398767"/>
    <lineage>
        <taxon>Bacteria</taxon>
        <taxon>Pseudomonadati</taxon>
        <taxon>Thermodesulfobacteriota</taxon>
        <taxon>Desulfuromonadia</taxon>
        <taxon>Geobacterales</taxon>
        <taxon>Geobacteraceae</taxon>
        <taxon>Trichlorobacter</taxon>
    </lineage>
</organism>
<dbReference type="EMBL" id="CP001089">
    <property type="protein sequence ID" value="ACD95074.1"/>
    <property type="molecule type" value="Genomic_DNA"/>
</dbReference>
<dbReference type="RefSeq" id="WP_012469419.1">
    <property type="nucleotide sequence ID" value="NC_010814.1"/>
</dbReference>
<dbReference type="SMR" id="B3E7U2"/>
<dbReference type="STRING" id="398767.Glov_1353"/>
<dbReference type="KEGG" id="glo:Glov_1353"/>
<dbReference type="eggNOG" id="COG0197">
    <property type="taxonomic scope" value="Bacteria"/>
</dbReference>
<dbReference type="HOGENOM" id="CLU_078858_2_1_7"/>
<dbReference type="OrthoDB" id="9802589at2"/>
<dbReference type="Proteomes" id="UP000002420">
    <property type="component" value="Chromosome"/>
</dbReference>
<dbReference type="GO" id="GO:0022625">
    <property type="term" value="C:cytosolic large ribosomal subunit"/>
    <property type="evidence" value="ECO:0007669"/>
    <property type="project" value="TreeGrafter"/>
</dbReference>
<dbReference type="GO" id="GO:0019843">
    <property type="term" value="F:rRNA binding"/>
    <property type="evidence" value="ECO:0007669"/>
    <property type="project" value="UniProtKB-UniRule"/>
</dbReference>
<dbReference type="GO" id="GO:0003735">
    <property type="term" value="F:structural constituent of ribosome"/>
    <property type="evidence" value="ECO:0007669"/>
    <property type="project" value="InterPro"/>
</dbReference>
<dbReference type="GO" id="GO:0000049">
    <property type="term" value="F:tRNA binding"/>
    <property type="evidence" value="ECO:0007669"/>
    <property type="project" value="UniProtKB-KW"/>
</dbReference>
<dbReference type="GO" id="GO:0006412">
    <property type="term" value="P:translation"/>
    <property type="evidence" value="ECO:0007669"/>
    <property type="project" value="UniProtKB-UniRule"/>
</dbReference>
<dbReference type="CDD" id="cd01433">
    <property type="entry name" value="Ribosomal_L16_L10e"/>
    <property type="match status" value="1"/>
</dbReference>
<dbReference type="FunFam" id="3.90.1170.10:FF:000001">
    <property type="entry name" value="50S ribosomal protein L16"/>
    <property type="match status" value="1"/>
</dbReference>
<dbReference type="Gene3D" id="3.90.1170.10">
    <property type="entry name" value="Ribosomal protein L10e/L16"/>
    <property type="match status" value="1"/>
</dbReference>
<dbReference type="HAMAP" id="MF_01342">
    <property type="entry name" value="Ribosomal_uL16"/>
    <property type="match status" value="1"/>
</dbReference>
<dbReference type="InterPro" id="IPR047873">
    <property type="entry name" value="Ribosomal_uL16"/>
</dbReference>
<dbReference type="InterPro" id="IPR000114">
    <property type="entry name" value="Ribosomal_uL16_bact-type"/>
</dbReference>
<dbReference type="InterPro" id="IPR020798">
    <property type="entry name" value="Ribosomal_uL16_CS"/>
</dbReference>
<dbReference type="InterPro" id="IPR016180">
    <property type="entry name" value="Ribosomal_uL16_dom"/>
</dbReference>
<dbReference type="InterPro" id="IPR036920">
    <property type="entry name" value="Ribosomal_uL16_sf"/>
</dbReference>
<dbReference type="NCBIfam" id="TIGR01164">
    <property type="entry name" value="rplP_bact"/>
    <property type="match status" value="1"/>
</dbReference>
<dbReference type="PANTHER" id="PTHR12220">
    <property type="entry name" value="50S/60S RIBOSOMAL PROTEIN L16"/>
    <property type="match status" value="1"/>
</dbReference>
<dbReference type="PANTHER" id="PTHR12220:SF13">
    <property type="entry name" value="LARGE RIBOSOMAL SUBUNIT PROTEIN UL16M"/>
    <property type="match status" value="1"/>
</dbReference>
<dbReference type="Pfam" id="PF00252">
    <property type="entry name" value="Ribosomal_L16"/>
    <property type="match status" value="1"/>
</dbReference>
<dbReference type="PRINTS" id="PR00060">
    <property type="entry name" value="RIBOSOMALL16"/>
</dbReference>
<dbReference type="SUPFAM" id="SSF54686">
    <property type="entry name" value="Ribosomal protein L16p/L10e"/>
    <property type="match status" value="1"/>
</dbReference>
<dbReference type="PROSITE" id="PS00586">
    <property type="entry name" value="RIBOSOMAL_L16_1"/>
    <property type="match status" value="1"/>
</dbReference>
<dbReference type="PROSITE" id="PS00701">
    <property type="entry name" value="RIBOSOMAL_L16_2"/>
    <property type="match status" value="1"/>
</dbReference>
<keyword id="KW-1185">Reference proteome</keyword>
<keyword id="KW-0687">Ribonucleoprotein</keyword>
<keyword id="KW-0689">Ribosomal protein</keyword>
<keyword id="KW-0694">RNA-binding</keyword>
<keyword id="KW-0699">rRNA-binding</keyword>
<keyword id="KW-0820">tRNA-binding</keyword>
<protein>
    <recommendedName>
        <fullName evidence="1">Large ribosomal subunit protein uL16</fullName>
    </recommendedName>
    <alternativeName>
        <fullName evidence="2">50S ribosomal protein L16</fullName>
    </alternativeName>
</protein>
<feature type="chain" id="PRO_1000142978" description="Large ribosomal subunit protein uL16">
    <location>
        <begin position="1"/>
        <end position="140"/>
    </location>
</feature>
<evidence type="ECO:0000255" key="1">
    <source>
        <dbReference type="HAMAP-Rule" id="MF_01342"/>
    </source>
</evidence>
<evidence type="ECO:0000305" key="2"/>
<name>RL16_TRIL1</name>
<accession>B3E7U2</accession>
<proteinExistence type="inferred from homology"/>
<reference key="1">
    <citation type="submission" date="2008-05" db="EMBL/GenBank/DDBJ databases">
        <title>Complete sequence of chromosome of Geobacter lovleyi SZ.</title>
        <authorList>
            <consortium name="US DOE Joint Genome Institute"/>
            <person name="Lucas S."/>
            <person name="Copeland A."/>
            <person name="Lapidus A."/>
            <person name="Glavina del Rio T."/>
            <person name="Dalin E."/>
            <person name="Tice H."/>
            <person name="Bruce D."/>
            <person name="Goodwin L."/>
            <person name="Pitluck S."/>
            <person name="Chertkov O."/>
            <person name="Meincke L."/>
            <person name="Brettin T."/>
            <person name="Detter J.C."/>
            <person name="Han C."/>
            <person name="Tapia R."/>
            <person name="Kuske C.R."/>
            <person name="Schmutz J."/>
            <person name="Larimer F."/>
            <person name="Land M."/>
            <person name="Hauser L."/>
            <person name="Kyrpides N."/>
            <person name="Mikhailova N."/>
            <person name="Sung Y."/>
            <person name="Fletcher K.E."/>
            <person name="Ritalahti K.M."/>
            <person name="Loeffler F.E."/>
            <person name="Richardson P."/>
        </authorList>
    </citation>
    <scope>NUCLEOTIDE SEQUENCE [LARGE SCALE GENOMIC DNA]</scope>
    <source>
        <strain>ATCC BAA-1151 / DSM 17278 / SZ</strain>
    </source>
</reference>
<sequence length="140" mass="15860">MLMPKRVKHRKQMKGRMTGAACRRIEISYGEFALQATECGWVDSRQIEAARIAMTRYIKRGGKIWIRMFPDKPLTAKPAETRMGKGKGSPDSWVCVVKPGMVLYEMEGVTEEIAREAFRLAAHKLPISTKFITRGTQNEG</sequence>
<gene>
    <name evidence="1" type="primary">rplP</name>
    <name type="ordered locus">Glov_1353</name>
</gene>